<proteinExistence type="inferred from homology"/>
<feature type="chain" id="PRO_0000082364" description="ATP synthase subunit b">
    <location>
        <begin position="1"/>
        <end position="162"/>
    </location>
</feature>
<feature type="transmembrane region" description="Helical" evidence="1">
    <location>
        <begin position="4"/>
        <end position="24"/>
    </location>
</feature>
<keyword id="KW-0066">ATP synthesis</keyword>
<keyword id="KW-1003">Cell membrane</keyword>
<keyword id="KW-0138">CF(0)</keyword>
<keyword id="KW-0375">Hydrogen ion transport</keyword>
<keyword id="KW-0406">Ion transport</keyword>
<keyword id="KW-0472">Membrane</keyword>
<keyword id="KW-1185">Reference proteome</keyword>
<keyword id="KW-0812">Transmembrane</keyword>
<keyword id="KW-1133">Transmembrane helix</keyword>
<keyword id="KW-0813">Transport</keyword>
<evidence type="ECO:0000255" key="1">
    <source>
        <dbReference type="HAMAP-Rule" id="MF_01398"/>
    </source>
</evidence>
<gene>
    <name evidence="1" type="primary">atpF</name>
    <name type="ordered locus">BH3758</name>
</gene>
<protein>
    <recommendedName>
        <fullName evidence="1">ATP synthase subunit b</fullName>
    </recommendedName>
    <alternativeName>
        <fullName evidence="1">ATP synthase F(0) sector subunit b</fullName>
    </alternativeName>
    <alternativeName>
        <fullName evidence="1">ATPase subunit I</fullName>
    </alternativeName>
    <alternativeName>
        <fullName evidence="1">F-type ATPase subunit b</fullName>
        <shortName evidence="1">F-ATPase subunit b</shortName>
    </alternativeName>
</protein>
<sequence length="162" mass="18631">MFDINWGSIIYQLIAFCVLLWLLSKFALKPLMGVMEKREQMINDQIDQADKDRKAAQEYLEQQRLAVEKAREEAQEIVQKAKKLSEQQGQEIVEAARAEGERLKEAALAEIQREKEQAVASLREQVASLSVLIATKVIEKELDEKEQEKLIAEYLKEVGEEL</sequence>
<accession>Q9K6H1</accession>
<name>ATPF_HALH5</name>
<comment type="function">
    <text evidence="1">F(1)F(0) ATP synthase produces ATP from ADP in the presence of a proton or sodium gradient. F-type ATPases consist of two structural domains, F(1) containing the extramembraneous catalytic core and F(0) containing the membrane proton channel, linked together by a central stalk and a peripheral stalk. During catalysis, ATP synthesis in the catalytic domain of F(1) is coupled via a rotary mechanism of the central stalk subunits to proton translocation.</text>
</comment>
<comment type="function">
    <text evidence="1">Component of the F(0) channel, it forms part of the peripheral stalk, linking F(1) to F(0).</text>
</comment>
<comment type="subunit">
    <text evidence="1">F-type ATPases have 2 components, F(1) - the catalytic core - and F(0) - the membrane proton channel. F(1) has five subunits: alpha(3), beta(3), gamma(1), delta(1), epsilon(1). F(0) has three main subunits: a(1), b(2) and c(10-14). The alpha and beta chains form an alternating ring which encloses part of the gamma chain. F(1) is attached to F(0) by a central stalk formed by the gamma and epsilon chains, while a peripheral stalk is formed by the delta and b chains.</text>
</comment>
<comment type="subcellular location">
    <subcellularLocation>
        <location evidence="1">Cell membrane</location>
        <topology evidence="1">Single-pass membrane protein</topology>
    </subcellularLocation>
</comment>
<comment type="similarity">
    <text evidence="1">Belongs to the ATPase B chain family.</text>
</comment>
<organism>
    <name type="scientific">Halalkalibacterium halodurans (strain ATCC BAA-125 / DSM 18197 / FERM 7344 / JCM 9153 / C-125)</name>
    <name type="common">Bacillus halodurans</name>
    <dbReference type="NCBI Taxonomy" id="272558"/>
    <lineage>
        <taxon>Bacteria</taxon>
        <taxon>Bacillati</taxon>
        <taxon>Bacillota</taxon>
        <taxon>Bacilli</taxon>
        <taxon>Bacillales</taxon>
        <taxon>Bacillaceae</taxon>
        <taxon>Halalkalibacterium (ex Joshi et al. 2022)</taxon>
    </lineage>
</organism>
<reference key="1">
    <citation type="journal article" date="2000" name="Nucleic Acids Res.">
        <title>Complete genome sequence of the alkaliphilic bacterium Bacillus halodurans and genomic sequence comparison with Bacillus subtilis.</title>
        <authorList>
            <person name="Takami H."/>
            <person name="Nakasone K."/>
            <person name="Takaki Y."/>
            <person name="Maeno G."/>
            <person name="Sasaki R."/>
            <person name="Masui N."/>
            <person name="Fuji F."/>
            <person name="Hirama C."/>
            <person name="Nakamura Y."/>
            <person name="Ogasawara N."/>
            <person name="Kuhara S."/>
            <person name="Horikoshi K."/>
        </authorList>
    </citation>
    <scope>NUCLEOTIDE SEQUENCE [LARGE SCALE GENOMIC DNA]</scope>
    <source>
        <strain>ATCC BAA-125 / DSM 18197 / FERM 7344 / JCM 9153 / C-125</strain>
    </source>
</reference>
<dbReference type="EMBL" id="BA000004">
    <property type="protein sequence ID" value="BAB07477.1"/>
    <property type="molecule type" value="Genomic_DNA"/>
</dbReference>
<dbReference type="PIR" id="F84119">
    <property type="entry name" value="F84119"/>
</dbReference>
<dbReference type="RefSeq" id="WP_010899883.1">
    <property type="nucleotide sequence ID" value="NC_002570.2"/>
</dbReference>
<dbReference type="SMR" id="Q9K6H1"/>
<dbReference type="STRING" id="272558.gene:10729671"/>
<dbReference type="GeneID" id="87599305"/>
<dbReference type="KEGG" id="bha:BH3758"/>
<dbReference type="eggNOG" id="COG0711">
    <property type="taxonomic scope" value="Bacteria"/>
</dbReference>
<dbReference type="HOGENOM" id="CLU_079215_4_2_9"/>
<dbReference type="OrthoDB" id="282095at2"/>
<dbReference type="Proteomes" id="UP000001258">
    <property type="component" value="Chromosome"/>
</dbReference>
<dbReference type="GO" id="GO:0005886">
    <property type="term" value="C:plasma membrane"/>
    <property type="evidence" value="ECO:0007669"/>
    <property type="project" value="UniProtKB-SubCell"/>
</dbReference>
<dbReference type="GO" id="GO:0045259">
    <property type="term" value="C:proton-transporting ATP synthase complex"/>
    <property type="evidence" value="ECO:0007669"/>
    <property type="project" value="UniProtKB-KW"/>
</dbReference>
<dbReference type="GO" id="GO:0046933">
    <property type="term" value="F:proton-transporting ATP synthase activity, rotational mechanism"/>
    <property type="evidence" value="ECO:0007669"/>
    <property type="project" value="UniProtKB-UniRule"/>
</dbReference>
<dbReference type="GO" id="GO:0046961">
    <property type="term" value="F:proton-transporting ATPase activity, rotational mechanism"/>
    <property type="evidence" value="ECO:0007669"/>
    <property type="project" value="TreeGrafter"/>
</dbReference>
<dbReference type="CDD" id="cd06503">
    <property type="entry name" value="ATP-synt_Fo_b"/>
    <property type="match status" value="1"/>
</dbReference>
<dbReference type="Gene3D" id="1.20.5.620">
    <property type="entry name" value="F1F0 ATP synthase subunit B, membrane domain"/>
    <property type="match status" value="1"/>
</dbReference>
<dbReference type="HAMAP" id="MF_01398">
    <property type="entry name" value="ATP_synth_b_bprime"/>
    <property type="match status" value="1"/>
</dbReference>
<dbReference type="InterPro" id="IPR028987">
    <property type="entry name" value="ATP_synth_B-like_membr_sf"/>
</dbReference>
<dbReference type="InterPro" id="IPR002146">
    <property type="entry name" value="ATP_synth_b/b'su_bac/chlpt"/>
</dbReference>
<dbReference type="InterPro" id="IPR005864">
    <property type="entry name" value="ATP_synth_F0_bsu_bac"/>
</dbReference>
<dbReference type="InterPro" id="IPR050059">
    <property type="entry name" value="ATP_synthase_B_chain"/>
</dbReference>
<dbReference type="NCBIfam" id="TIGR01144">
    <property type="entry name" value="ATP_synt_b"/>
    <property type="match status" value="1"/>
</dbReference>
<dbReference type="PANTHER" id="PTHR33445:SF1">
    <property type="entry name" value="ATP SYNTHASE SUBUNIT B"/>
    <property type="match status" value="1"/>
</dbReference>
<dbReference type="PANTHER" id="PTHR33445">
    <property type="entry name" value="ATP SYNTHASE SUBUNIT B', CHLOROPLASTIC"/>
    <property type="match status" value="1"/>
</dbReference>
<dbReference type="Pfam" id="PF00430">
    <property type="entry name" value="ATP-synt_B"/>
    <property type="match status" value="1"/>
</dbReference>
<dbReference type="SUPFAM" id="SSF81573">
    <property type="entry name" value="F1F0 ATP synthase subunit B, membrane domain"/>
    <property type="match status" value="1"/>
</dbReference>